<accession>Q9H422</accession>
<accession>O14632</accession>
<accession>Q2PBG4</accession>
<accession>Q2PBG5</accession>
<accession>Q92632</accession>
<accession>Q9HAS2</accession>
<protein>
    <recommendedName>
        <fullName>Homeodomain-interacting protein kinase 3</fullName>
        <ecNumber>2.7.11.1</ecNumber>
    </recommendedName>
    <alternativeName>
        <fullName>Androgen receptor-interacting nuclear protein kinase</fullName>
        <shortName>ANPK</shortName>
    </alternativeName>
    <alternativeName>
        <fullName>Fas-interacting serine/threonine-protein kinase</fullName>
        <shortName>FIST</shortName>
    </alternativeName>
    <alternativeName>
        <fullName>Homolog of protein kinase YAK1</fullName>
    </alternativeName>
</protein>
<name>HIPK3_HUMAN</name>
<organism>
    <name type="scientific">Homo sapiens</name>
    <name type="common">Human</name>
    <dbReference type="NCBI Taxonomy" id="9606"/>
    <lineage>
        <taxon>Eukaryota</taxon>
        <taxon>Metazoa</taxon>
        <taxon>Chordata</taxon>
        <taxon>Craniata</taxon>
        <taxon>Vertebrata</taxon>
        <taxon>Euteleostomi</taxon>
        <taxon>Mammalia</taxon>
        <taxon>Eutheria</taxon>
        <taxon>Euarchontoglires</taxon>
        <taxon>Primates</taxon>
        <taxon>Haplorrhini</taxon>
        <taxon>Catarrhini</taxon>
        <taxon>Hominidae</taxon>
        <taxon>Homo</taxon>
    </lineage>
</organism>
<proteinExistence type="evidence at protein level"/>
<feature type="chain" id="PRO_0000085998" description="Homeodomain-interacting protein kinase 3">
    <location>
        <begin position="1"/>
        <end position="1215"/>
    </location>
</feature>
<feature type="domain" description="Protein kinase" evidence="3">
    <location>
        <begin position="197"/>
        <end position="525"/>
    </location>
</feature>
<feature type="region of interest" description="Interaction with AR" evidence="1">
    <location>
        <begin position="767"/>
        <end position="944"/>
    </location>
</feature>
<feature type="region of interest" description="Interaction with FAS" evidence="1">
    <location>
        <begin position="796"/>
        <end position="891"/>
    </location>
</feature>
<feature type="region of interest" description="Required for localization to nuclear speckles" evidence="1">
    <location>
        <begin position="855"/>
        <end position="1011"/>
    </location>
</feature>
<feature type="region of interest" description="SUMO interaction motifs (SIM); required for nuclear localization and kinase activity" evidence="1">
    <location>
        <begin position="866"/>
        <end position="918"/>
    </location>
</feature>
<feature type="region of interest" description="Interaction with UBL1" evidence="14">
    <location>
        <begin position="870"/>
        <end position="880"/>
    </location>
</feature>
<feature type="region of interest" description="Disordered" evidence="5">
    <location>
        <begin position="912"/>
        <end position="987"/>
    </location>
</feature>
<feature type="compositionally biased region" description="Low complexity" evidence="5">
    <location>
        <begin position="912"/>
        <end position="929"/>
    </location>
</feature>
<feature type="compositionally biased region" description="Polar residues" evidence="5">
    <location>
        <begin position="945"/>
        <end position="957"/>
    </location>
</feature>
<feature type="active site" description="Proton acceptor" evidence="3 4">
    <location>
        <position position="322"/>
    </location>
</feature>
<feature type="binding site" evidence="3">
    <location>
        <begin position="203"/>
        <end position="211"/>
    </location>
    <ligand>
        <name>ATP</name>
        <dbReference type="ChEBI" id="CHEBI:30616"/>
    </ligand>
</feature>
<feature type="binding site" evidence="3">
    <location>
        <position position="226"/>
    </location>
    <ligand>
        <name>ATP</name>
        <dbReference type="ChEBI" id="CHEBI:30616"/>
    </ligand>
</feature>
<feature type="modified residue" description="Phosphotyrosine" evidence="2">
    <location>
        <position position="359"/>
    </location>
</feature>
<feature type="cross-link" description="Glycyl lysine isopeptide (Lys-Gly) (interchain with G-Cter in SUMO2)" evidence="15">
    <location>
        <position position="27"/>
    </location>
</feature>
<feature type="cross-link" description="Glycyl lysine isopeptide (Lys-Gly) (interchain with G-Cter in SUMO)" evidence="1">
    <location>
        <position position="1208"/>
    </location>
</feature>
<feature type="splice variant" id="VSP_013140" description="In isoform 2." evidence="13">
    <location>
        <begin position="770"/>
        <end position="790"/>
    </location>
</feature>
<feature type="sequence variant" id="VAR_040549" description="In dbSNP:rs34193811." evidence="10">
    <original>Q</original>
    <variation>R</variation>
    <location>
        <position position="142"/>
    </location>
</feature>
<feature type="sequence variant" id="VAR_040550" description="In dbSNP:rs34698015." evidence="10">
    <original>G</original>
    <variation>E</variation>
    <location>
        <position position="170"/>
    </location>
</feature>
<feature type="sequence variant" id="VAR_040551" description="In dbSNP:rs35689361." evidence="10">
    <original>C</original>
    <variation>R</variation>
    <location>
        <position position="191"/>
    </location>
</feature>
<feature type="sequence variant" id="VAR_051627" description="In dbSNP:rs266472.">
    <original>V</original>
    <variation>I</variation>
    <location>
        <position position="474"/>
    </location>
</feature>
<feature type="sequence variant" id="VAR_040552" description="In dbSNP:rs11032229." evidence="10">
    <original>S</original>
    <variation>N</variation>
    <location>
        <position position="500"/>
    </location>
</feature>
<feature type="sequence variant" id="VAR_040553" description="In dbSNP:rs55807239." evidence="10">
    <original>P</original>
    <variation>L</variation>
    <location>
        <position position="729"/>
    </location>
</feature>
<feature type="mutagenesis site" description="Loss of kinase activity and impaired activation of SF1." evidence="9">
    <original>K</original>
    <variation>R</variation>
    <location>
        <position position="226"/>
    </location>
</feature>
<feature type="sequence conflict" description="In Ref. 2; AAG25990." evidence="14" ref="2">
    <original>N</original>
    <variation>K</variation>
    <location>
        <position position="69"/>
    </location>
</feature>
<feature type="sequence conflict" description="In Ref. 1; AAC64294." evidence="14" ref="1">
    <original>A</original>
    <variation>V</variation>
    <location>
        <position position="111"/>
    </location>
</feature>
<feature type="sequence conflict" description="In Ref. 2; AAG25990." evidence="14" ref="2">
    <original>Q</original>
    <variation>K</variation>
    <location>
        <position position="1148"/>
    </location>
</feature>
<feature type="strand" evidence="16">
    <location>
        <begin position="193"/>
        <end position="195"/>
    </location>
</feature>
<feature type="strand" evidence="16">
    <location>
        <begin position="197"/>
        <end position="205"/>
    </location>
</feature>
<feature type="strand" evidence="16">
    <location>
        <begin position="210"/>
        <end position="216"/>
    </location>
</feature>
<feature type="strand" evidence="16">
    <location>
        <begin position="222"/>
        <end position="228"/>
    </location>
</feature>
<feature type="helix" evidence="16">
    <location>
        <begin position="232"/>
        <end position="234"/>
    </location>
</feature>
<feature type="helix" evidence="16">
    <location>
        <begin position="235"/>
        <end position="249"/>
    </location>
</feature>
<feature type="turn" evidence="17">
    <location>
        <begin position="250"/>
        <end position="252"/>
    </location>
</feature>
<feature type="turn" evidence="16">
    <location>
        <begin position="255"/>
        <end position="257"/>
    </location>
</feature>
<feature type="strand" evidence="16">
    <location>
        <begin position="261"/>
        <end position="267"/>
    </location>
</feature>
<feature type="strand" evidence="16">
    <location>
        <begin position="270"/>
        <end position="276"/>
    </location>
</feature>
<feature type="helix" evidence="16">
    <location>
        <begin position="282"/>
        <end position="288"/>
    </location>
</feature>
<feature type="turn" evidence="16">
    <location>
        <begin position="289"/>
        <end position="291"/>
    </location>
</feature>
<feature type="helix" evidence="16">
    <location>
        <begin position="296"/>
        <end position="315"/>
    </location>
</feature>
<feature type="helix" evidence="16">
    <location>
        <begin position="325"/>
        <end position="327"/>
    </location>
</feature>
<feature type="strand" evidence="16">
    <location>
        <begin position="328"/>
        <end position="332"/>
    </location>
</feature>
<feature type="turn" evidence="16">
    <location>
        <begin position="333"/>
        <end position="335"/>
    </location>
</feature>
<feature type="strand" evidence="16">
    <location>
        <begin position="336"/>
        <end position="342"/>
    </location>
</feature>
<feature type="helix" evidence="16">
    <location>
        <begin position="363"/>
        <end position="365"/>
    </location>
</feature>
<feature type="helix" evidence="16">
    <location>
        <begin position="368"/>
        <end position="372"/>
    </location>
</feature>
<feature type="helix" evidence="16">
    <location>
        <begin position="379"/>
        <end position="394"/>
    </location>
</feature>
<feature type="helix" evidence="16">
    <location>
        <begin position="404"/>
        <end position="415"/>
    </location>
</feature>
<feature type="helix" evidence="16">
    <location>
        <begin position="420"/>
        <end position="424"/>
    </location>
</feature>
<feature type="helix" evidence="16">
    <location>
        <begin position="428"/>
        <end position="431"/>
    </location>
</feature>
<feature type="helix" evidence="16">
    <location>
        <begin position="449"/>
        <end position="456"/>
    </location>
</feature>
<feature type="helix" evidence="16">
    <location>
        <begin position="471"/>
        <end position="474"/>
    </location>
</feature>
<feature type="helix" evidence="16">
    <location>
        <begin position="485"/>
        <end position="505"/>
    </location>
</feature>
<feature type="turn" evidence="16">
    <location>
        <begin position="510"/>
        <end position="512"/>
    </location>
</feature>
<feature type="helix" evidence="16">
    <location>
        <begin position="516"/>
        <end position="519"/>
    </location>
</feature>
<feature type="helix" evidence="16">
    <location>
        <begin position="523"/>
        <end position="526"/>
    </location>
</feature>
<feature type="turn" evidence="16">
    <location>
        <begin position="528"/>
        <end position="532"/>
    </location>
</feature>
<feature type="helix" evidence="16">
    <location>
        <begin position="537"/>
        <end position="546"/>
    </location>
</feature>
<comment type="function">
    <text evidence="8 9">Serine/threonine-protein kinase involved in transcription regulation, apoptosis and steroidogenic gene expression. Phosphorylates JUN and RUNX2. Seems to negatively regulate apoptosis by promoting FADD phosphorylation. Enhances androgen receptor-mediated transcription. May act as a transcriptional corepressor for NK homeodomain transcription factors. The phosphorylation of NR5A1 activates SF1 leading to increased steroidogenic gene expression upon cAMP signaling pathway stimulation. In osteoblasts, supports transcription activation: phosphorylates RUNX2 that synergizes with SPEN/MINT to enhance FGFR2-mediated activation of the osteocalcin FGF-responsive element (OCFRE).</text>
</comment>
<comment type="catalytic activity">
    <reaction>
        <text>L-seryl-[protein] + ATP = O-phospho-L-seryl-[protein] + ADP + H(+)</text>
        <dbReference type="Rhea" id="RHEA:17989"/>
        <dbReference type="Rhea" id="RHEA-COMP:9863"/>
        <dbReference type="Rhea" id="RHEA-COMP:11604"/>
        <dbReference type="ChEBI" id="CHEBI:15378"/>
        <dbReference type="ChEBI" id="CHEBI:29999"/>
        <dbReference type="ChEBI" id="CHEBI:30616"/>
        <dbReference type="ChEBI" id="CHEBI:83421"/>
        <dbReference type="ChEBI" id="CHEBI:456216"/>
        <dbReference type="EC" id="2.7.11.1"/>
    </reaction>
</comment>
<comment type="catalytic activity">
    <reaction>
        <text>L-threonyl-[protein] + ATP = O-phospho-L-threonyl-[protein] + ADP + H(+)</text>
        <dbReference type="Rhea" id="RHEA:46608"/>
        <dbReference type="Rhea" id="RHEA-COMP:11060"/>
        <dbReference type="Rhea" id="RHEA-COMP:11605"/>
        <dbReference type="ChEBI" id="CHEBI:15378"/>
        <dbReference type="ChEBI" id="CHEBI:30013"/>
        <dbReference type="ChEBI" id="CHEBI:30616"/>
        <dbReference type="ChEBI" id="CHEBI:61977"/>
        <dbReference type="ChEBI" id="CHEBI:456216"/>
        <dbReference type="EC" id="2.7.11.1"/>
    </reaction>
</comment>
<comment type="subunit">
    <text evidence="1 6 9">Interacts with Nkx1-2. Interacts with FAS and DAXX. Probably part of a complex consisting of HIPK3, FAS and FADD. Interacts with and stabilizes ligand-bound androgen receptor (AR) (By similarity). Interacts with UBL1/SUMO-1. Binds to NR5A1/SF1, SPEN/MINT and RUNX2.</text>
</comment>
<comment type="subcellular location">
    <subcellularLocation>
        <location evidence="7">Cytoplasm</location>
    </subcellularLocation>
    <subcellularLocation>
        <location evidence="7">Nucleus</location>
    </subcellularLocation>
</comment>
<comment type="alternative products">
    <event type="alternative splicing"/>
    <isoform>
        <id>Q9H422-1</id>
        <name>1</name>
        <name>HIPK3</name>
        <sequence type="displayed"/>
    </isoform>
    <isoform>
        <id>Q9H422-2</id>
        <name>2</name>
        <name>FIST</name>
        <sequence type="described" ref="VSP_013140"/>
    </isoform>
</comment>
<comment type="tissue specificity">
    <text evidence="7 11 12">Overexpressed in multidrug resistant cells. Highly expressed in heart and skeletal muscle, and at lower levels in placenta, pancreas, brain, spleen, prostate, thymus, testis, small intestine, colon and leukocytes. Not found in liver and lung.</text>
</comment>
<comment type="PTM">
    <text evidence="1">Autophosphorylated, but autophosphorylation is not required for catalytic activity.</text>
</comment>
<comment type="PTM">
    <text evidence="1">May be sumoylated.</text>
</comment>
<comment type="similarity">
    <text evidence="14">Belongs to the protein kinase superfamily. CMGC Ser/Thr protein kinase family. HIPK subfamily.</text>
</comment>
<evidence type="ECO:0000250" key="1"/>
<evidence type="ECO:0000250" key="2">
    <source>
        <dbReference type="UniProtKB" id="Q9ERH7"/>
    </source>
</evidence>
<evidence type="ECO:0000255" key="3">
    <source>
        <dbReference type="PROSITE-ProRule" id="PRU00159"/>
    </source>
</evidence>
<evidence type="ECO:0000255" key="4">
    <source>
        <dbReference type="PROSITE-ProRule" id="PRU10027"/>
    </source>
</evidence>
<evidence type="ECO:0000256" key="5">
    <source>
        <dbReference type="SAM" id="MobiDB-lite"/>
    </source>
</evidence>
<evidence type="ECO:0000269" key="6">
    <source>
    </source>
</evidence>
<evidence type="ECO:0000269" key="7">
    <source>
    </source>
</evidence>
<evidence type="ECO:0000269" key="8">
    <source>
    </source>
</evidence>
<evidence type="ECO:0000269" key="9">
    <source>
    </source>
</evidence>
<evidence type="ECO:0000269" key="10">
    <source>
    </source>
</evidence>
<evidence type="ECO:0000269" key="11">
    <source>
    </source>
</evidence>
<evidence type="ECO:0000269" key="12">
    <source>
    </source>
</evidence>
<evidence type="ECO:0000303" key="13">
    <source>
    </source>
</evidence>
<evidence type="ECO:0000305" key="14"/>
<evidence type="ECO:0007744" key="15">
    <source>
    </source>
</evidence>
<evidence type="ECO:0007829" key="16">
    <source>
        <dbReference type="PDB" id="7O7I"/>
    </source>
</evidence>
<evidence type="ECO:0007829" key="17">
    <source>
        <dbReference type="PDB" id="7O7J"/>
    </source>
</evidence>
<dbReference type="EC" id="2.7.11.1"/>
<dbReference type="EMBL" id="AF004849">
    <property type="protein sequence ID" value="AAC64294.1"/>
    <property type="molecule type" value="mRNA"/>
</dbReference>
<dbReference type="EMBL" id="AF305239">
    <property type="protein sequence ID" value="AAG25990.1"/>
    <property type="molecule type" value="mRNA"/>
</dbReference>
<dbReference type="EMBL" id="AL122015">
    <property type="status" value="NOT_ANNOTATED_CDS"/>
    <property type="molecule type" value="Genomic_DNA"/>
</dbReference>
<dbReference type="EMBL" id="Y09306">
    <property type="protein sequence ID" value="CAA70489.1"/>
    <property type="status" value="ALT_TERM"/>
    <property type="molecule type" value="mRNA"/>
</dbReference>
<dbReference type="CCDS" id="CCDS41634.1">
    <molecule id="Q9H422-2"/>
</dbReference>
<dbReference type="CCDS" id="CCDS7884.1">
    <molecule id="Q9H422-1"/>
</dbReference>
<dbReference type="RefSeq" id="NP_001041665.1">
    <molecule id="Q9H422-2"/>
    <property type="nucleotide sequence ID" value="NM_001048200.3"/>
</dbReference>
<dbReference type="RefSeq" id="NP_001265091.1">
    <molecule id="Q9H422-2"/>
    <property type="nucleotide sequence ID" value="NM_001278162.2"/>
</dbReference>
<dbReference type="RefSeq" id="NP_001265092.1">
    <molecule id="Q9H422-2"/>
    <property type="nucleotide sequence ID" value="NM_001278163.2"/>
</dbReference>
<dbReference type="RefSeq" id="NP_005725.3">
    <molecule id="Q9H422-1"/>
    <property type="nucleotide sequence ID" value="NM_005734.4"/>
</dbReference>
<dbReference type="RefSeq" id="XP_005252786.1">
    <property type="nucleotide sequence ID" value="XM_005252729.2"/>
</dbReference>
<dbReference type="RefSeq" id="XP_016872565.1">
    <property type="nucleotide sequence ID" value="XM_017017076.1"/>
</dbReference>
<dbReference type="RefSeq" id="XP_016872566.1">
    <property type="nucleotide sequence ID" value="XM_017017077.1"/>
</dbReference>
<dbReference type="RefSeq" id="XP_054223402.1">
    <molecule id="Q9H422-1"/>
    <property type="nucleotide sequence ID" value="XM_054367427.1"/>
</dbReference>
<dbReference type="PDB" id="7O7I">
    <property type="method" value="X-ray"/>
    <property type="resolution" value="2.50 A"/>
    <property type="chains" value="A=159-562"/>
</dbReference>
<dbReference type="PDB" id="7O7J">
    <property type="method" value="X-ray"/>
    <property type="resolution" value="2.81 A"/>
    <property type="chains" value="A=159-562"/>
</dbReference>
<dbReference type="PDBsum" id="7O7I"/>
<dbReference type="PDBsum" id="7O7J"/>
<dbReference type="SMR" id="Q9H422"/>
<dbReference type="BioGRID" id="115420">
    <property type="interactions" value="37"/>
</dbReference>
<dbReference type="FunCoup" id="Q9H422">
    <property type="interactions" value="3153"/>
</dbReference>
<dbReference type="IntAct" id="Q9H422">
    <property type="interactions" value="23"/>
</dbReference>
<dbReference type="MINT" id="Q9H422"/>
<dbReference type="STRING" id="9606.ENSP00000304226"/>
<dbReference type="BindingDB" id="Q9H422"/>
<dbReference type="ChEMBL" id="CHEMBL4577"/>
<dbReference type="DrugBank" id="DB12010">
    <property type="generic name" value="Fostamatinib"/>
</dbReference>
<dbReference type="DrugCentral" id="Q9H422"/>
<dbReference type="GuidetoPHARMACOLOGY" id="2035"/>
<dbReference type="GlyGen" id="Q9H422">
    <property type="glycosylation" value="1 site, 1 O-linked glycan (1 site)"/>
</dbReference>
<dbReference type="iPTMnet" id="Q9H422"/>
<dbReference type="PhosphoSitePlus" id="Q9H422"/>
<dbReference type="BioMuta" id="HIPK3"/>
<dbReference type="DMDM" id="61213741"/>
<dbReference type="CPTAC" id="non-CPTAC-6026"/>
<dbReference type="CPTAC" id="non-CPTAC-6027"/>
<dbReference type="jPOST" id="Q9H422"/>
<dbReference type="MassIVE" id="Q9H422"/>
<dbReference type="PaxDb" id="9606-ENSP00000304226"/>
<dbReference type="PeptideAtlas" id="Q9H422"/>
<dbReference type="ProteomicsDB" id="80780">
    <molecule id="Q9H422-1"/>
</dbReference>
<dbReference type="ProteomicsDB" id="80781">
    <molecule id="Q9H422-2"/>
</dbReference>
<dbReference type="Antibodypedia" id="25715">
    <property type="antibodies" value="208 antibodies from 28 providers"/>
</dbReference>
<dbReference type="DNASU" id="10114"/>
<dbReference type="Ensembl" id="ENST00000303296.9">
    <molecule id="Q9H422-1"/>
    <property type="protein sequence ID" value="ENSP00000304226.4"/>
    <property type="gene ID" value="ENSG00000110422.12"/>
</dbReference>
<dbReference type="Ensembl" id="ENST00000379016.7">
    <molecule id="Q9H422-2"/>
    <property type="protein sequence ID" value="ENSP00000368301.3"/>
    <property type="gene ID" value="ENSG00000110422.12"/>
</dbReference>
<dbReference type="Ensembl" id="ENST00000456517.2">
    <molecule id="Q9H422-2"/>
    <property type="protein sequence ID" value="ENSP00000398241.1"/>
    <property type="gene ID" value="ENSG00000110422.12"/>
</dbReference>
<dbReference type="Ensembl" id="ENST00000525975.5">
    <molecule id="Q9H422-2"/>
    <property type="protein sequence ID" value="ENSP00000431710.1"/>
    <property type="gene ID" value="ENSG00000110422.12"/>
</dbReference>
<dbReference type="GeneID" id="10114"/>
<dbReference type="KEGG" id="hsa:10114"/>
<dbReference type="MANE-Select" id="ENST00000303296.9">
    <property type="protein sequence ID" value="ENSP00000304226.4"/>
    <property type="RefSeq nucleotide sequence ID" value="NM_005734.5"/>
    <property type="RefSeq protein sequence ID" value="NP_005725.3"/>
</dbReference>
<dbReference type="UCSC" id="uc001mul.3">
    <molecule id="Q9H422-1"/>
    <property type="organism name" value="human"/>
</dbReference>
<dbReference type="AGR" id="HGNC:4915"/>
<dbReference type="CTD" id="10114"/>
<dbReference type="DisGeNET" id="10114"/>
<dbReference type="GeneCards" id="HIPK3"/>
<dbReference type="HGNC" id="HGNC:4915">
    <property type="gene designation" value="HIPK3"/>
</dbReference>
<dbReference type="HPA" id="ENSG00000110422">
    <property type="expression patterns" value="Low tissue specificity"/>
</dbReference>
<dbReference type="MIM" id="604424">
    <property type="type" value="gene"/>
</dbReference>
<dbReference type="neXtProt" id="NX_Q9H422"/>
<dbReference type="OpenTargets" id="ENSG00000110422"/>
<dbReference type="PharmGKB" id="PA29292"/>
<dbReference type="VEuPathDB" id="HostDB:ENSG00000110422"/>
<dbReference type="eggNOG" id="KOG0667">
    <property type="taxonomic scope" value="Eukaryota"/>
</dbReference>
<dbReference type="GeneTree" id="ENSGT00940000155960"/>
<dbReference type="HOGENOM" id="CLU_003045_2_0_1"/>
<dbReference type="InParanoid" id="Q9H422"/>
<dbReference type="OMA" id="GIAHVIW"/>
<dbReference type="OrthoDB" id="10030361at2759"/>
<dbReference type="PAN-GO" id="Q9H422">
    <property type="GO annotations" value="7 GO annotations based on evolutionary models"/>
</dbReference>
<dbReference type="PhylomeDB" id="Q9H422"/>
<dbReference type="TreeFam" id="TF105417"/>
<dbReference type="PathwayCommons" id="Q9H422"/>
<dbReference type="SignaLink" id="Q9H422"/>
<dbReference type="SIGNOR" id="Q9H422"/>
<dbReference type="BioGRID-ORCS" id="10114">
    <property type="hits" value="14 hits in 1186 CRISPR screens"/>
</dbReference>
<dbReference type="ChiTaRS" id="HIPK3">
    <property type="organism name" value="human"/>
</dbReference>
<dbReference type="GeneWiki" id="HIPK3"/>
<dbReference type="GenomeRNAi" id="10114"/>
<dbReference type="Pharos" id="Q9H422">
    <property type="development level" value="Tchem"/>
</dbReference>
<dbReference type="PRO" id="PR:Q9H422"/>
<dbReference type="Proteomes" id="UP000005640">
    <property type="component" value="Chromosome 11"/>
</dbReference>
<dbReference type="RNAct" id="Q9H422">
    <property type="molecule type" value="protein"/>
</dbReference>
<dbReference type="Bgee" id="ENSG00000110422">
    <property type="expression patterns" value="Expressed in endothelial cell and 195 other cell types or tissues"/>
</dbReference>
<dbReference type="ExpressionAtlas" id="Q9H422">
    <property type="expression patterns" value="baseline and differential"/>
</dbReference>
<dbReference type="GO" id="GO:0005737">
    <property type="term" value="C:cytoplasm"/>
    <property type="evidence" value="ECO:0000318"/>
    <property type="project" value="GO_Central"/>
</dbReference>
<dbReference type="GO" id="GO:0005829">
    <property type="term" value="C:cytosol"/>
    <property type="evidence" value="ECO:0000314"/>
    <property type="project" value="HPA"/>
</dbReference>
<dbReference type="GO" id="GO:0016604">
    <property type="term" value="C:nuclear body"/>
    <property type="evidence" value="ECO:0000314"/>
    <property type="project" value="HPA"/>
</dbReference>
<dbReference type="GO" id="GO:0005634">
    <property type="term" value="C:nucleus"/>
    <property type="evidence" value="ECO:0000318"/>
    <property type="project" value="GO_Central"/>
</dbReference>
<dbReference type="GO" id="GO:0005886">
    <property type="term" value="C:plasma membrane"/>
    <property type="evidence" value="ECO:0000314"/>
    <property type="project" value="HPA"/>
</dbReference>
<dbReference type="GO" id="GO:0016605">
    <property type="term" value="C:PML body"/>
    <property type="evidence" value="ECO:0000318"/>
    <property type="project" value="GO_Central"/>
</dbReference>
<dbReference type="GO" id="GO:0005524">
    <property type="term" value="F:ATP binding"/>
    <property type="evidence" value="ECO:0007669"/>
    <property type="project" value="UniProtKB-KW"/>
</dbReference>
<dbReference type="GO" id="GO:0004672">
    <property type="term" value="F:protein kinase activity"/>
    <property type="evidence" value="ECO:0000314"/>
    <property type="project" value="UniProtKB"/>
</dbReference>
<dbReference type="GO" id="GO:0106310">
    <property type="term" value="F:protein serine kinase activity"/>
    <property type="evidence" value="ECO:0007669"/>
    <property type="project" value="RHEA"/>
</dbReference>
<dbReference type="GO" id="GO:0004674">
    <property type="term" value="F:protein serine/threonine kinase activity"/>
    <property type="evidence" value="ECO:0000314"/>
    <property type="project" value="MGI"/>
</dbReference>
<dbReference type="GO" id="GO:0004713">
    <property type="term" value="F:protein tyrosine kinase activity"/>
    <property type="evidence" value="ECO:0000318"/>
    <property type="project" value="GO_Central"/>
</dbReference>
<dbReference type="GO" id="GO:0006915">
    <property type="term" value="P:apoptotic process"/>
    <property type="evidence" value="ECO:0007669"/>
    <property type="project" value="UniProtKB-KW"/>
</dbReference>
<dbReference type="GO" id="GO:0009299">
    <property type="term" value="P:mRNA transcription"/>
    <property type="evidence" value="ECO:0000314"/>
    <property type="project" value="UniProtKB"/>
</dbReference>
<dbReference type="GO" id="GO:0043066">
    <property type="term" value="P:negative regulation of apoptotic process"/>
    <property type="evidence" value="ECO:0000315"/>
    <property type="project" value="UniProtKB"/>
</dbReference>
<dbReference type="GO" id="GO:0043508">
    <property type="term" value="P:negative regulation of JUN kinase activity"/>
    <property type="evidence" value="ECO:0000250"/>
    <property type="project" value="UniProtKB"/>
</dbReference>
<dbReference type="GO" id="GO:0018105">
    <property type="term" value="P:peptidyl-serine phosphorylation"/>
    <property type="evidence" value="ECO:0000250"/>
    <property type="project" value="UniProtKB"/>
</dbReference>
<dbReference type="GO" id="GO:0018107">
    <property type="term" value="P:peptidyl-threonine phosphorylation"/>
    <property type="evidence" value="ECO:0000250"/>
    <property type="project" value="UniProtKB"/>
</dbReference>
<dbReference type="GO" id="GO:0006468">
    <property type="term" value="P:protein phosphorylation"/>
    <property type="evidence" value="ECO:0000314"/>
    <property type="project" value="UniProtKB"/>
</dbReference>
<dbReference type="CDD" id="cd14229">
    <property type="entry name" value="STKc_HIPK3"/>
    <property type="match status" value="1"/>
</dbReference>
<dbReference type="FunFam" id="1.10.510.10:FF:000029">
    <property type="entry name" value="Homeodomain-interacting protein kinase 2 isoform 1"/>
    <property type="match status" value="1"/>
</dbReference>
<dbReference type="FunFam" id="3.30.200.20:FF:000022">
    <property type="entry name" value="Homeodomain-interacting protein kinase 2 isoform 1"/>
    <property type="match status" value="1"/>
</dbReference>
<dbReference type="Gene3D" id="3.30.200.20">
    <property type="entry name" value="Phosphorylase Kinase, domain 1"/>
    <property type="match status" value="1"/>
</dbReference>
<dbReference type="Gene3D" id="1.10.510.10">
    <property type="entry name" value="Transferase(Phosphotransferase) domain 1"/>
    <property type="match status" value="1"/>
</dbReference>
<dbReference type="InterPro" id="IPR011009">
    <property type="entry name" value="Kinase-like_dom_sf"/>
</dbReference>
<dbReference type="InterPro" id="IPR000719">
    <property type="entry name" value="Prot_kinase_dom"/>
</dbReference>
<dbReference type="InterPro" id="IPR017441">
    <property type="entry name" value="Protein_kinase_ATP_BS"/>
</dbReference>
<dbReference type="InterPro" id="IPR008271">
    <property type="entry name" value="Ser/Thr_kinase_AS"/>
</dbReference>
<dbReference type="InterPro" id="IPR050494">
    <property type="entry name" value="Ser_Thr_dual-spec_kinase"/>
</dbReference>
<dbReference type="PANTHER" id="PTHR24058">
    <property type="entry name" value="DUAL SPECIFICITY PROTEIN KINASE"/>
    <property type="match status" value="1"/>
</dbReference>
<dbReference type="PANTHER" id="PTHR24058:SF45">
    <property type="entry name" value="HOMEODOMAIN-INTERACTING PROTEIN KINASE 3"/>
    <property type="match status" value="1"/>
</dbReference>
<dbReference type="Pfam" id="PF00069">
    <property type="entry name" value="Pkinase"/>
    <property type="match status" value="1"/>
</dbReference>
<dbReference type="SMART" id="SM00220">
    <property type="entry name" value="S_TKc"/>
    <property type="match status" value="1"/>
</dbReference>
<dbReference type="SUPFAM" id="SSF56112">
    <property type="entry name" value="Protein kinase-like (PK-like)"/>
    <property type="match status" value="1"/>
</dbReference>
<dbReference type="PROSITE" id="PS00107">
    <property type="entry name" value="PROTEIN_KINASE_ATP"/>
    <property type="match status" value="1"/>
</dbReference>
<dbReference type="PROSITE" id="PS50011">
    <property type="entry name" value="PROTEIN_KINASE_DOM"/>
    <property type="match status" value="1"/>
</dbReference>
<dbReference type="PROSITE" id="PS00108">
    <property type="entry name" value="PROTEIN_KINASE_ST"/>
    <property type="match status" value="1"/>
</dbReference>
<gene>
    <name type="primary">HIPK3</name>
    <name type="synonym">DYRK6</name>
    <name type="synonym">FIST3</name>
    <name type="synonym">PKY</name>
</gene>
<keyword id="KW-0002">3D-structure</keyword>
<keyword id="KW-0025">Alternative splicing</keyword>
<keyword id="KW-0053">Apoptosis</keyword>
<keyword id="KW-0067">ATP-binding</keyword>
<keyword id="KW-0963">Cytoplasm</keyword>
<keyword id="KW-1017">Isopeptide bond</keyword>
<keyword id="KW-0418">Kinase</keyword>
<keyword id="KW-0547">Nucleotide-binding</keyword>
<keyword id="KW-0539">Nucleus</keyword>
<keyword id="KW-0597">Phosphoprotein</keyword>
<keyword id="KW-1267">Proteomics identification</keyword>
<keyword id="KW-1185">Reference proteome</keyword>
<keyword id="KW-0723">Serine/threonine-protein kinase</keyword>
<keyword id="KW-0804">Transcription</keyword>
<keyword id="KW-0805">Transcription regulation</keyword>
<keyword id="KW-0808">Transferase</keyword>
<keyword id="KW-0832">Ubl conjugation</keyword>
<reference key="1">
    <citation type="journal article" date="1997" name="Gene">
        <title>Identification and sequence of human PKY, a putative kinase with increased expression in multidrug-resistant cells, with homology to yeast protein kinase Yak1.</title>
        <authorList>
            <person name="Begley D.A."/>
            <person name="Berkenpas M.B."/>
            <person name="Sampson K.E."/>
            <person name="Abraham I."/>
        </authorList>
    </citation>
    <scope>NUCLEOTIDE SEQUENCE [MRNA] (ISOFORM 1)</scope>
    <scope>TISSUE SPECIFICITY</scope>
</reference>
<reference key="2">
    <citation type="journal article" date="2000" name="J. Exp. Med.">
        <title>FIST/HIPK3: a Fas/FADD-interacting serine/threonine kinase that induces FADD phosphorylation and inhibits Fas-mediated Jun NH2-terminal kinase activation.</title>
        <authorList>
            <person name="Rochat-Steiner V."/>
            <person name="Becker K."/>
            <person name="Micheau O."/>
            <person name="Schneider P."/>
            <person name="Burns K."/>
            <person name="Tschopp J."/>
        </authorList>
    </citation>
    <scope>NUCLEOTIDE SEQUENCE [MRNA] (ISOFORM 2)</scope>
    <scope>SUBCELLULAR LOCATION</scope>
    <scope>TISSUE SPECIFICITY</scope>
</reference>
<reference key="3">
    <citation type="journal article" date="2006" name="Nature">
        <title>Human chromosome 11 DNA sequence and analysis including novel gene identification.</title>
        <authorList>
            <person name="Taylor T.D."/>
            <person name="Noguchi H."/>
            <person name="Totoki Y."/>
            <person name="Toyoda A."/>
            <person name="Kuroki Y."/>
            <person name="Dewar K."/>
            <person name="Lloyd C."/>
            <person name="Itoh T."/>
            <person name="Takeda T."/>
            <person name="Kim D.-W."/>
            <person name="She X."/>
            <person name="Barlow K.F."/>
            <person name="Bloom T."/>
            <person name="Bruford E."/>
            <person name="Chang J.L."/>
            <person name="Cuomo C.A."/>
            <person name="Eichler E."/>
            <person name="FitzGerald M.G."/>
            <person name="Jaffe D.B."/>
            <person name="LaButti K."/>
            <person name="Nicol R."/>
            <person name="Park H.-S."/>
            <person name="Seaman C."/>
            <person name="Sougnez C."/>
            <person name="Yang X."/>
            <person name="Zimmer A.R."/>
            <person name="Zody M.C."/>
            <person name="Birren B.W."/>
            <person name="Nusbaum C."/>
            <person name="Fujiyama A."/>
            <person name="Hattori M."/>
            <person name="Rogers J."/>
            <person name="Lander E.S."/>
            <person name="Sakaki Y."/>
        </authorList>
    </citation>
    <scope>NUCLEOTIDE SEQUENCE [LARGE SCALE GENOMIC DNA]</scope>
</reference>
<reference key="4">
    <citation type="submission" date="1996-11" db="EMBL/GenBank/DDBJ databases">
        <authorList>
            <person name="Becker W."/>
            <person name="Joost H.G."/>
        </authorList>
    </citation>
    <scope>NUCLEOTIDE SEQUENCE [MRNA] OF 1-295 (ISOFORMS 1/2)</scope>
</reference>
<reference key="5">
    <citation type="journal article" date="1998" name="Mol. Biol. Cell">
        <title>Activation of androgen receptor function by a novel nuclear protein kinase.</title>
        <authorList>
            <person name="Moilanen A.-M."/>
            <person name="Karvonen U."/>
            <person name="Poukka H."/>
            <person name="Jaenne O.A."/>
            <person name="Palvimo J.J."/>
        </authorList>
    </citation>
    <scope>TISSUE SPECIFICITY</scope>
</reference>
<reference key="6">
    <citation type="journal article" date="2000" name="J. Biol. Chem.">
        <title>Covalent modification of p73alpha by SUMO-1. Two-hybrid screening with p73 identifies novel SUMO-1-interacting proteins and a SUMO-1 interaction motif.</title>
        <authorList>
            <person name="Minty A."/>
            <person name="Dumont X."/>
            <person name="Kaghad M."/>
            <person name="Caput D."/>
        </authorList>
    </citation>
    <scope>INTERACTION WITH UBL1</scope>
</reference>
<reference key="7">
    <citation type="journal article" date="2004" name="J. Biol. Chem.">
        <title>JNK regulates HIPK3 expression and promotes resistance to Fas-mediated apoptosis in DU 145 prostate carcinoma cells.</title>
        <authorList>
            <person name="Curtin J.F."/>
            <person name="Cotter T.G."/>
        </authorList>
    </citation>
    <scope>FUNCTION</scope>
</reference>
<reference key="8">
    <citation type="journal article" date="2007" name="Mol. Cell. Biol.">
        <title>Cyclic AMP stimulates SF-1-dependent CYP11A1 expression through homeodomain-interacting protein kinase 3-mediated Jun N-terminal kinase and c-Jun phosphorylation.</title>
        <authorList>
            <person name="Lan H.-C."/>
            <person name="Li H.-J."/>
            <person name="Lin G."/>
            <person name="Lai P.-Y."/>
            <person name="Chung B.-C."/>
        </authorList>
    </citation>
    <scope>FUNCTION AS KINASE AND IN CAMP SIGNALING PATHWAY</scope>
    <scope>INTERACTION WITH NR5A1/SF1</scope>
    <scope>MUTAGENESIS OF LYS-226</scope>
</reference>
<reference key="9">
    <citation type="journal article" date="2017" name="Nat. Struct. Mol. Biol.">
        <title>Site-specific mapping of the human SUMO proteome reveals co-modification with phosphorylation.</title>
        <authorList>
            <person name="Hendriks I.A."/>
            <person name="Lyon D."/>
            <person name="Young C."/>
            <person name="Jensen L.J."/>
            <person name="Vertegaal A.C."/>
            <person name="Nielsen M.L."/>
        </authorList>
    </citation>
    <scope>SUMOYLATION [LARGE SCALE ANALYSIS] AT LYS-27</scope>
    <scope>IDENTIFICATION BY MASS SPECTROMETRY [LARGE SCALE ANALYSIS]</scope>
</reference>
<reference key="10">
    <citation type="journal article" date="2007" name="Nature">
        <title>Patterns of somatic mutation in human cancer genomes.</title>
        <authorList>
            <person name="Greenman C."/>
            <person name="Stephens P."/>
            <person name="Smith R."/>
            <person name="Dalgliesh G.L."/>
            <person name="Hunter C."/>
            <person name="Bignell G."/>
            <person name="Davies H."/>
            <person name="Teague J."/>
            <person name="Butler A."/>
            <person name="Stevens C."/>
            <person name="Edkins S."/>
            <person name="O'Meara S."/>
            <person name="Vastrik I."/>
            <person name="Schmidt E.E."/>
            <person name="Avis T."/>
            <person name="Barthorpe S."/>
            <person name="Bhamra G."/>
            <person name="Buck G."/>
            <person name="Choudhury B."/>
            <person name="Clements J."/>
            <person name="Cole J."/>
            <person name="Dicks E."/>
            <person name="Forbes S."/>
            <person name="Gray K."/>
            <person name="Halliday K."/>
            <person name="Harrison R."/>
            <person name="Hills K."/>
            <person name="Hinton J."/>
            <person name="Jenkinson A."/>
            <person name="Jones D."/>
            <person name="Menzies A."/>
            <person name="Mironenko T."/>
            <person name="Perry J."/>
            <person name="Raine K."/>
            <person name="Richardson D."/>
            <person name="Shepherd R."/>
            <person name="Small A."/>
            <person name="Tofts C."/>
            <person name="Varian J."/>
            <person name="Webb T."/>
            <person name="West S."/>
            <person name="Widaa S."/>
            <person name="Yates A."/>
            <person name="Cahill D.P."/>
            <person name="Louis D.N."/>
            <person name="Goldstraw P."/>
            <person name="Nicholson A.G."/>
            <person name="Brasseur F."/>
            <person name="Looijenga L."/>
            <person name="Weber B.L."/>
            <person name="Chiew Y.-E."/>
            <person name="DeFazio A."/>
            <person name="Greaves M.F."/>
            <person name="Green A.R."/>
            <person name="Campbell P."/>
            <person name="Birney E."/>
            <person name="Easton D.F."/>
            <person name="Chenevix-Trench G."/>
            <person name="Tan M.-H."/>
            <person name="Khoo S.K."/>
            <person name="Teh B.T."/>
            <person name="Yuen S.T."/>
            <person name="Leung S.Y."/>
            <person name="Wooster R."/>
            <person name="Futreal P.A."/>
            <person name="Stratton M.R."/>
        </authorList>
    </citation>
    <scope>VARIANTS [LARGE SCALE ANALYSIS] ARG-142; GLU-170; ARG-191; ASN-500 AND LEU-729</scope>
</reference>
<sequence>MASQVLVYPPYVYQTQSSAFCSVKKLKVEPSSCVFQERNYPRTYVNGRNFGNSHPPTKGSAFQTKIPFNRPRGHNFSLQTSAVVLKNTAGATKVIAAQAQQAHVQAPQIGAWRNRLHFLEGPQRCGLKRKSEELDNHSSAMQIVDELSILPAMLQTNMGNPVTVVTATTGSKQNCTTGEGDYQLVQHEVLCSMKNTYEVLDFLGRGTFGQVVKCWKRGTNEIVAIKILKNHPSYARQGQIEVSILARLSTENADEYNFVRAYECFQHRNHTCLVFEMLEQNLYDFLKQNKFSPLPLKVIRPILQQVATALKKLKSLGLIHADLKPENIMLVDPVRQPYRVKVIDFGSASHVSKTVCSTYLQSRYYRAPEIILGLPFCEAIDMWSLGCVIAELFLGWPLYPGALEYDQIRYISQTQGLPGEQLLNVGTKSTRFFCKETDMSHSGWRLKTLEEHEAETGMKSKEARKYIFNSLDDVAHVNTVMDLEGSDLLAEKADRREFVSLLKKMLLIDADLRITPAETLNHPFVNMKHLLDFPHSNHVKSCFHIMDICKSHLNSCDTNNHNKTSLLRPVASSSTATLTANFTKIGTLRSQALTTSAHSVVHHGIPLQAGTAQFGCGDAFQQTLIICPPAIQGIPATHGKPTSYSIRVDNTVPLVTQAPAVQPLQIRPGVLSQTWSGRTQQMLVPAWQQVTPLAPATTTLTSESVAGSHRLGDWGKMISCSNHYNSVMPQPLLTNQITLSAPQPVSVGIAHVVWPQPATTKKNKQCQNRGILVKLMEWEPGREEINAFSWSNSLQNTNIPHSAFISPKIINGKDVEEVSCIETQDNQNSEGEARNCCETSIRQDSDSSVSDKQRQTIIIADSPSPAVSVITISSDTDEEETSQRHSLRECKGSLDCEACQSTLNIDRMCSLSSPDSTLSTSSSGQSSPSPCKRPNSMSDEEQESSCDTVDGSPTSDSSGHDSPFAESTFVEDTHENTELVSSADTETKPAVCSVVVPPVELENGLNADEHMANTDSICQPLIKGRSAPGRLNQPSAVGTRQQKLTSAFQQQHLNFSQVQHFGSGHQEWNGNFGHRRQQAYIPTSVTSNPFTLSHGSPNHTAVHAHLAGNTHLGGQPTLLPYPSSATLSSAAPVAHLLASPCTSRPMLQHPTYNISHPSGIVHQVPVGLNPRLLPSPTIHQTQYKPIFPPHSYIAASPAYTGFPLSPTKLSQYPYM</sequence>